<protein>
    <recommendedName>
        <fullName>NADH-ubiquinone oxidoreductase chain 6</fullName>
        <ecNumber evidence="1">7.1.1.2</ecNumber>
    </recommendedName>
    <alternativeName>
        <fullName>NADH dehydrogenase subunit 6</fullName>
    </alternativeName>
</protein>
<evidence type="ECO:0000250" key="1">
    <source>
        <dbReference type="UniProtKB" id="P03923"/>
    </source>
</evidence>
<evidence type="ECO:0000250" key="2">
    <source>
        <dbReference type="UniProtKB" id="P03924"/>
    </source>
</evidence>
<evidence type="ECO:0000255" key="3"/>
<evidence type="ECO:0000305" key="4"/>
<keyword id="KW-0249">Electron transport</keyword>
<keyword id="KW-0472">Membrane</keyword>
<keyword id="KW-0496">Mitochondrion</keyword>
<keyword id="KW-0999">Mitochondrion inner membrane</keyword>
<keyword id="KW-0520">NAD</keyword>
<keyword id="KW-1185">Reference proteome</keyword>
<keyword id="KW-0679">Respiratory chain</keyword>
<keyword id="KW-1278">Translocase</keyword>
<keyword id="KW-0812">Transmembrane</keyword>
<keyword id="KW-1133">Transmembrane helix</keyword>
<keyword id="KW-0813">Transport</keyword>
<keyword id="KW-0830">Ubiquinone</keyword>
<feature type="chain" id="PRO_0000253523" description="NADH-ubiquinone oxidoreductase chain 6">
    <location>
        <begin position="1"/>
        <end position="175"/>
    </location>
</feature>
<feature type="transmembrane region" description="Helical" evidence="3">
    <location>
        <begin position="1"/>
        <end position="21"/>
    </location>
</feature>
<feature type="transmembrane region" description="Helical" evidence="3">
    <location>
        <begin position="25"/>
        <end position="45"/>
    </location>
</feature>
<feature type="transmembrane region" description="Helical" evidence="3">
    <location>
        <begin position="47"/>
        <end position="67"/>
    </location>
</feature>
<feature type="transmembrane region" description="Helical" evidence="3">
    <location>
        <begin position="88"/>
        <end position="108"/>
    </location>
</feature>
<feature type="transmembrane region" description="Helical" evidence="3">
    <location>
        <begin position="149"/>
        <end position="169"/>
    </location>
</feature>
<reference key="1">
    <citation type="journal article" date="2002" name="Genetics">
        <title>Coexistence of Bos taurus and B. indicus mitochondrial DNAs in nuclear transfer-derived somatic cattle clones.</title>
        <authorList>
            <person name="Steinborn R."/>
            <person name="Schinogl P."/>
            <person name="Wells D.N."/>
            <person name="Bergthaler A."/>
            <person name="Mueller M."/>
            <person name="Brem G."/>
        </authorList>
    </citation>
    <scope>NUCLEOTIDE SEQUENCE [GENOMIC DNA]</scope>
</reference>
<reference key="2">
    <citation type="submission" date="2002-03" db="EMBL/GenBank/DDBJ databases">
        <title>Complete sequence of the Bos indicus mitochondrial genome.</title>
        <authorList>
            <person name="Hiendleder S."/>
            <person name="Lewalski H."/>
            <person name="Wolf E."/>
        </authorList>
    </citation>
    <scope>NUCLEOTIDE SEQUENCE [GENOMIC DNA]</scope>
    <source>
        <tissue>Liver</tissue>
    </source>
</reference>
<reference key="3">
    <citation type="submission" date="2002-06" db="EMBL/GenBank/DDBJ databases">
        <title>The complete mitochondrial genome nucleotide sequence of Bos indicus.</title>
        <authorList>
            <person name="Miretti M.M."/>
            <person name="Pereira H.A. Jr."/>
            <person name="Greggio C."/>
            <person name="Suzuki J. Jr."/>
            <person name="Ferro J.A."/>
            <person name="Ferro M.I."/>
            <person name="Meirelles F."/>
            <person name="Garcia J.M."/>
            <person name="Smith L.C."/>
        </authorList>
    </citation>
    <scope>NUCLEOTIDE SEQUENCE [GENOMIC DNA]</scope>
</reference>
<name>NU6M_BOSIN</name>
<proteinExistence type="inferred from homology"/>
<comment type="function">
    <text evidence="1">Core subunit of the mitochondrial membrane respiratory chain NADH dehydrogenase (Complex I) which catalyzes electron transfer from NADH through the respiratory chain, using ubiquinone as an electron acceptor. Essential for the catalytic activity and assembly of complex I.</text>
</comment>
<comment type="catalytic activity">
    <reaction evidence="1">
        <text>a ubiquinone + NADH + 5 H(+)(in) = a ubiquinol + NAD(+) + 4 H(+)(out)</text>
        <dbReference type="Rhea" id="RHEA:29091"/>
        <dbReference type="Rhea" id="RHEA-COMP:9565"/>
        <dbReference type="Rhea" id="RHEA-COMP:9566"/>
        <dbReference type="ChEBI" id="CHEBI:15378"/>
        <dbReference type="ChEBI" id="CHEBI:16389"/>
        <dbReference type="ChEBI" id="CHEBI:17976"/>
        <dbReference type="ChEBI" id="CHEBI:57540"/>
        <dbReference type="ChEBI" id="CHEBI:57945"/>
        <dbReference type="EC" id="7.1.1.2"/>
    </reaction>
</comment>
<comment type="subunit">
    <text evidence="2">Core subunit of respiratory chain NADH dehydrogenase (Complex I) which is composed of 45 different subunits.</text>
</comment>
<comment type="subcellular location">
    <subcellularLocation>
        <location evidence="2">Mitochondrion inner membrane</location>
        <topology evidence="3">Multi-pass membrane protein</topology>
    </subcellularLocation>
</comment>
<comment type="similarity">
    <text evidence="4">Belongs to the complex I subunit 6 family.</text>
</comment>
<gene>
    <name type="primary">MT-ND6</name>
    <name type="synonym">MTND6</name>
    <name type="synonym">NADH6</name>
    <name type="synonym">ND6</name>
</gene>
<organism>
    <name type="scientific">Bos indicus</name>
    <name type="common">Zebu</name>
    <dbReference type="NCBI Taxonomy" id="9915"/>
    <lineage>
        <taxon>Eukaryota</taxon>
        <taxon>Metazoa</taxon>
        <taxon>Chordata</taxon>
        <taxon>Craniata</taxon>
        <taxon>Vertebrata</taxon>
        <taxon>Euteleostomi</taxon>
        <taxon>Mammalia</taxon>
        <taxon>Eutheria</taxon>
        <taxon>Laurasiatheria</taxon>
        <taxon>Artiodactyla</taxon>
        <taxon>Ruminantia</taxon>
        <taxon>Pecora</taxon>
        <taxon>Bovidae</taxon>
        <taxon>Bovinae</taxon>
        <taxon>Bos</taxon>
    </lineage>
</organism>
<dbReference type="EC" id="7.1.1.2" evidence="1"/>
<dbReference type="EMBL" id="AF416451">
    <property type="protein sequence ID" value="AAL57372.1"/>
    <property type="molecule type" value="Genomic_DNA"/>
</dbReference>
<dbReference type="EMBL" id="AF492350">
    <property type="protein sequence ID" value="AAQ06591.1"/>
    <property type="molecule type" value="Genomic_DNA"/>
</dbReference>
<dbReference type="EMBL" id="AY126697">
    <property type="protein sequence ID" value="AAM95741.1"/>
    <property type="molecule type" value="Genomic_DNA"/>
</dbReference>
<dbReference type="RefSeq" id="YP_052708.1">
    <property type="nucleotide sequence ID" value="NC_005971.1"/>
</dbReference>
<dbReference type="SMR" id="Q71PB7"/>
<dbReference type="GeneID" id="2885971"/>
<dbReference type="KEGG" id="biu:2885971"/>
<dbReference type="CTD" id="4541"/>
<dbReference type="OrthoDB" id="41038at91561"/>
<dbReference type="Proteomes" id="UP000515132">
    <property type="component" value="Mitochondrion MT"/>
</dbReference>
<dbReference type="GO" id="GO:0005743">
    <property type="term" value="C:mitochondrial inner membrane"/>
    <property type="evidence" value="ECO:0000250"/>
    <property type="project" value="UniProtKB"/>
</dbReference>
<dbReference type="GO" id="GO:0008137">
    <property type="term" value="F:NADH dehydrogenase (ubiquinone) activity"/>
    <property type="evidence" value="ECO:0000250"/>
    <property type="project" value="UniProtKB"/>
</dbReference>
<dbReference type="GO" id="GO:0006120">
    <property type="term" value="P:mitochondrial electron transport, NADH to ubiquinone"/>
    <property type="evidence" value="ECO:0000250"/>
    <property type="project" value="UniProtKB"/>
</dbReference>
<dbReference type="GO" id="GO:0032981">
    <property type="term" value="P:mitochondrial respiratory chain complex I assembly"/>
    <property type="evidence" value="ECO:0000250"/>
    <property type="project" value="UniProtKB"/>
</dbReference>
<dbReference type="Gene3D" id="1.20.120.1200">
    <property type="entry name" value="NADH-ubiquinone/plastoquinone oxidoreductase chain 6, subunit NuoJ"/>
    <property type="match status" value="1"/>
</dbReference>
<dbReference type="InterPro" id="IPR050269">
    <property type="entry name" value="ComplexI_Subunit6"/>
</dbReference>
<dbReference type="InterPro" id="IPR001457">
    <property type="entry name" value="NADH_UbQ/plastoQ_OxRdtase_su6"/>
</dbReference>
<dbReference type="InterPro" id="IPR042106">
    <property type="entry name" value="Nuo/plastoQ_OxRdtase_6_NuoJ"/>
</dbReference>
<dbReference type="PANTHER" id="PTHR11435">
    <property type="entry name" value="NADH UBIQUINONE OXIDOREDUCTASE SUBUNIT ND6"/>
    <property type="match status" value="1"/>
</dbReference>
<dbReference type="PANTHER" id="PTHR11435:SF1">
    <property type="entry name" value="NADH-UBIQUINONE OXIDOREDUCTASE CHAIN 6"/>
    <property type="match status" value="1"/>
</dbReference>
<dbReference type="Pfam" id="PF00499">
    <property type="entry name" value="Oxidored_q3"/>
    <property type="match status" value="1"/>
</dbReference>
<geneLocation type="mitochondrion"/>
<sequence length="175" mass="19078">MMLYIVFILSVIFVMGFVGFSSKPSPIYGGLGLIVSGGVGCGIVLNFGGSFLGLMVFLIYLGGMMVVFGYTTAMATEQYPEIWLSNKAVLGAFVTGLLMEFFMVYYVLKDKEVEVVFEFNGLGDWVIYDTGDSGFFSEEAMGIAALYSYGTWLVIVTGWSLLIGVVVIMEITRGN</sequence>
<accession>Q71PB7</accession>